<keyword id="KW-0539">Nucleus</keyword>
<keyword id="KW-1185">Reference proteome</keyword>
<keyword id="KW-0690">Ribosome biogenesis</keyword>
<keyword id="KW-0698">rRNA processing</keyword>
<comment type="function">
    <text evidence="1">Involved in rRNA-processing at A0, A1 and A2 sites and negatively regulates telomerase.</text>
</comment>
<comment type="subcellular location">
    <subcellularLocation>
        <location evidence="1">Nucleus</location>
        <location evidence="1">Nucleolus</location>
    </subcellularLocation>
</comment>
<comment type="similarity">
    <text evidence="4">Belongs to the PINX1 family.</text>
</comment>
<protein>
    <recommendedName>
        <fullName>Protein pxr1</fullName>
    </recommendedName>
    <alternativeName>
        <fullName>PinX1-related protein 1</fullName>
    </alternativeName>
</protein>
<reference key="1">
    <citation type="journal article" date="2007" name="Nat. Biotechnol.">
        <title>Genome sequencing and analysis of the versatile cell factory Aspergillus niger CBS 513.88.</title>
        <authorList>
            <person name="Pel H.J."/>
            <person name="de Winde J.H."/>
            <person name="Archer D.B."/>
            <person name="Dyer P.S."/>
            <person name="Hofmann G."/>
            <person name="Schaap P.J."/>
            <person name="Turner G."/>
            <person name="de Vries R.P."/>
            <person name="Albang R."/>
            <person name="Albermann K."/>
            <person name="Andersen M.R."/>
            <person name="Bendtsen J.D."/>
            <person name="Benen J.A.E."/>
            <person name="van den Berg M."/>
            <person name="Breestraat S."/>
            <person name="Caddick M.X."/>
            <person name="Contreras R."/>
            <person name="Cornell M."/>
            <person name="Coutinho P.M."/>
            <person name="Danchin E.G.J."/>
            <person name="Debets A.J.M."/>
            <person name="Dekker P."/>
            <person name="van Dijck P.W.M."/>
            <person name="van Dijk A."/>
            <person name="Dijkhuizen L."/>
            <person name="Driessen A.J.M."/>
            <person name="d'Enfert C."/>
            <person name="Geysens S."/>
            <person name="Goosen C."/>
            <person name="Groot G.S.P."/>
            <person name="de Groot P.W.J."/>
            <person name="Guillemette T."/>
            <person name="Henrissat B."/>
            <person name="Herweijer M."/>
            <person name="van den Hombergh J.P.T.W."/>
            <person name="van den Hondel C.A.M.J.J."/>
            <person name="van der Heijden R.T.J.M."/>
            <person name="van der Kaaij R.M."/>
            <person name="Klis F.M."/>
            <person name="Kools H.J."/>
            <person name="Kubicek C.P."/>
            <person name="van Kuyk P.A."/>
            <person name="Lauber J."/>
            <person name="Lu X."/>
            <person name="van der Maarel M.J.E.C."/>
            <person name="Meulenberg R."/>
            <person name="Menke H."/>
            <person name="Mortimer M.A."/>
            <person name="Nielsen J."/>
            <person name="Oliver S.G."/>
            <person name="Olsthoorn M."/>
            <person name="Pal K."/>
            <person name="van Peij N.N.M.E."/>
            <person name="Ram A.F.J."/>
            <person name="Rinas U."/>
            <person name="Roubos J.A."/>
            <person name="Sagt C.M.J."/>
            <person name="Schmoll M."/>
            <person name="Sun J."/>
            <person name="Ussery D."/>
            <person name="Varga J."/>
            <person name="Vervecken W."/>
            <person name="van de Vondervoort P.J.J."/>
            <person name="Wedler H."/>
            <person name="Woesten H.A.B."/>
            <person name="Zeng A.-P."/>
            <person name="van Ooyen A.J.J."/>
            <person name="Visser J."/>
            <person name="Stam H."/>
        </authorList>
    </citation>
    <scope>NUCLEOTIDE SEQUENCE [LARGE SCALE GENOMIC DNA]</scope>
    <source>
        <strain>ATCC MYA-4892 / CBS 513.88 / FGSC A1513</strain>
    </source>
</reference>
<name>PXR1_ASPNC</name>
<feature type="chain" id="PRO_0000324880" description="Protein pxr1">
    <location>
        <begin position="1"/>
        <end position="285"/>
    </location>
</feature>
<feature type="domain" description="G-patch" evidence="2">
    <location>
        <begin position="25"/>
        <end position="79"/>
    </location>
</feature>
<feature type="region of interest" description="Disordered" evidence="3">
    <location>
        <begin position="1"/>
        <end position="23"/>
    </location>
</feature>
<feature type="region of interest" description="Disordered" evidence="3">
    <location>
        <begin position="144"/>
        <end position="263"/>
    </location>
</feature>
<feature type="compositionally biased region" description="Basic residues" evidence="3">
    <location>
        <begin position="1"/>
        <end position="11"/>
    </location>
</feature>
<feature type="compositionally biased region" description="Basic and acidic residues" evidence="3">
    <location>
        <begin position="152"/>
        <end position="163"/>
    </location>
</feature>
<feature type="compositionally biased region" description="Basic residues" evidence="3">
    <location>
        <begin position="190"/>
        <end position="208"/>
    </location>
</feature>
<feature type="compositionally biased region" description="Basic and acidic residues" evidence="3">
    <location>
        <begin position="224"/>
        <end position="234"/>
    </location>
</feature>
<feature type="compositionally biased region" description="Basic residues" evidence="3">
    <location>
        <begin position="254"/>
        <end position="263"/>
    </location>
</feature>
<evidence type="ECO:0000250" key="1"/>
<evidence type="ECO:0000255" key="2">
    <source>
        <dbReference type="PROSITE-ProRule" id="PRU00092"/>
    </source>
</evidence>
<evidence type="ECO:0000256" key="3">
    <source>
        <dbReference type="SAM" id="MobiDB-lite"/>
    </source>
</evidence>
<evidence type="ECO:0000305" key="4"/>
<organism>
    <name type="scientific">Aspergillus niger (strain ATCC MYA-4892 / CBS 513.88 / FGSC A1513)</name>
    <dbReference type="NCBI Taxonomy" id="425011"/>
    <lineage>
        <taxon>Eukaryota</taxon>
        <taxon>Fungi</taxon>
        <taxon>Dikarya</taxon>
        <taxon>Ascomycota</taxon>
        <taxon>Pezizomycotina</taxon>
        <taxon>Eurotiomycetes</taxon>
        <taxon>Eurotiomycetidae</taxon>
        <taxon>Eurotiales</taxon>
        <taxon>Aspergillaceae</taxon>
        <taxon>Aspergillus</taxon>
        <taxon>Aspergillus subgen. Circumdati</taxon>
    </lineage>
</organism>
<accession>A2R156</accession>
<gene>
    <name type="primary">pxr1</name>
    <name type="ORF">An13g00030</name>
</gene>
<proteinExistence type="inferred from homology"/>
<sequence length="285" mass="31334">MGLAAPRKKIKISHDPNNTNWSRSTSGFGHKILSSQGWTPGSFLGARNAAHAEMFTAASASHIKVVLKDDTLGLGARPKRDPLNEPTGLDAFKGLLGRLNGKSDADLQVEQQKRDNVKLARYAATKWQAVTFISGGLLAQEKTTPIVTEEPQGIHKDKQEDKLSATVPGPDSDGVEGSDNIGGQSDQSIKKKKSKSKNHREKKDRKRKHTEEPESTDSGNTNKRSTEKKSKATRDDEESSSTTSKGLSRERRPMGRHVFRGRHIAQKKAALMDEKSLNEIFMVKS</sequence>
<dbReference type="EMBL" id="AM270295">
    <property type="protein sequence ID" value="CAK46406.1"/>
    <property type="molecule type" value="Genomic_DNA"/>
</dbReference>
<dbReference type="RefSeq" id="XP_001396145.1">
    <property type="nucleotide sequence ID" value="XM_001396108.1"/>
</dbReference>
<dbReference type="EnsemblFungi" id="CAK46406">
    <property type="protein sequence ID" value="CAK46406"/>
    <property type="gene ID" value="An13g00030"/>
</dbReference>
<dbReference type="GeneID" id="4986469"/>
<dbReference type="KEGG" id="ang:An13g00030"/>
<dbReference type="VEuPathDB" id="FungiDB:An13g00030"/>
<dbReference type="HOGENOM" id="CLU_052839_0_0_1"/>
<dbReference type="Proteomes" id="UP000006706">
    <property type="component" value="Chromosome 2L"/>
</dbReference>
<dbReference type="GO" id="GO:0005730">
    <property type="term" value="C:nucleolus"/>
    <property type="evidence" value="ECO:0007669"/>
    <property type="project" value="UniProtKB-SubCell"/>
</dbReference>
<dbReference type="GO" id="GO:0003676">
    <property type="term" value="F:nucleic acid binding"/>
    <property type="evidence" value="ECO:0007669"/>
    <property type="project" value="InterPro"/>
</dbReference>
<dbReference type="GO" id="GO:0006364">
    <property type="term" value="P:rRNA processing"/>
    <property type="evidence" value="ECO:0007669"/>
    <property type="project" value="UniProtKB-KW"/>
</dbReference>
<dbReference type="InterPro" id="IPR000467">
    <property type="entry name" value="G_patch_dom"/>
</dbReference>
<dbReference type="InterPro" id="IPR050656">
    <property type="entry name" value="PINX1"/>
</dbReference>
<dbReference type="PANTHER" id="PTHR23149">
    <property type="entry name" value="G PATCH DOMAIN CONTAINING PROTEIN"/>
    <property type="match status" value="1"/>
</dbReference>
<dbReference type="PANTHER" id="PTHR23149:SF31">
    <property type="entry name" value="PROTEIN PXR1"/>
    <property type="match status" value="1"/>
</dbReference>
<dbReference type="Pfam" id="PF01585">
    <property type="entry name" value="G-patch"/>
    <property type="match status" value="1"/>
</dbReference>
<dbReference type="PROSITE" id="PS50174">
    <property type="entry name" value="G_PATCH"/>
    <property type="match status" value="1"/>
</dbReference>